<sequence>MYAVLVTGGKQYRVAQGEKLRIEKLEVEVGSEIKFDNILMLGDSDGVKLGDALKGAAVTAKVLSQGRADKVRIIKFRRRKHHMKRQGHRQYYTEIEITGIAG</sequence>
<comment type="function">
    <text evidence="1">This protein binds to 23S rRNA in the presence of protein L20.</text>
</comment>
<comment type="subunit">
    <text evidence="1">Part of the 50S ribosomal subunit. Contacts protein L20.</text>
</comment>
<comment type="similarity">
    <text evidence="1">Belongs to the bacterial ribosomal protein bL21 family.</text>
</comment>
<name>RL21_STRMK</name>
<feature type="chain" id="PRO_1000143856" description="Large ribosomal subunit protein bL21">
    <location>
        <begin position="1"/>
        <end position="102"/>
    </location>
</feature>
<protein>
    <recommendedName>
        <fullName evidence="1">Large ribosomal subunit protein bL21</fullName>
    </recommendedName>
    <alternativeName>
        <fullName evidence="2">50S ribosomal protein L21</fullName>
    </alternativeName>
</protein>
<reference key="1">
    <citation type="journal article" date="2008" name="Genome Biol.">
        <title>The complete genome, comparative and functional analysis of Stenotrophomonas maltophilia reveals an organism heavily shielded by drug resistance determinants.</title>
        <authorList>
            <person name="Crossman L.C."/>
            <person name="Gould V.C."/>
            <person name="Dow J.M."/>
            <person name="Vernikos G.S."/>
            <person name="Okazaki A."/>
            <person name="Sebaihia M."/>
            <person name="Saunders D."/>
            <person name="Arrowsmith C."/>
            <person name="Carver T."/>
            <person name="Peters N."/>
            <person name="Adlem E."/>
            <person name="Kerhornou A."/>
            <person name="Lord A."/>
            <person name="Murphy L."/>
            <person name="Seeger K."/>
            <person name="Squares R."/>
            <person name="Rutter S."/>
            <person name="Quail M.A."/>
            <person name="Rajandream M.A."/>
            <person name="Harris D."/>
            <person name="Churcher C."/>
            <person name="Bentley S.D."/>
            <person name="Parkhill J."/>
            <person name="Thomson N.R."/>
            <person name="Avison M.B."/>
        </authorList>
    </citation>
    <scope>NUCLEOTIDE SEQUENCE [LARGE SCALE GENOMIC DNA]</scope>
    <source>
        <strain>K279a</strain>
    </source>
</reference>
<dbReference type="EMBL" id="AM743169">
    <property type="protein sequence ID" value="CAQ44828.1"/>
    <property type="molecule type" value="Genomic_DNA"/>
</dbReference>
<dbReference type="RefSeq" id="WP_005408557.1">
    <property type="nucleotide sequence ID" value="NC_010943.1"/>
</dbReference>
<dbReference type="SMR" id="B2FTD1"/>
<dbReference type="EnsemblBacteria" id="CAQ44828">
    <property type="protein sequence ID" value="CAQ44828"/>
    <property type="gene ID" value="Smlt1278"/>
</dbReference>
<dbReference type="GeneID" id="97260264"/>
<dbReference type="KEGG" id="sml:Smlt1278"/>
<dbReference type="eggNOG" id="COG0261">
    <property type="taxonomic scope" value="Bacteria"/>
</dbReference>
<dbReference type="HOGENOM" id="CLU_061463_3_1_6"/>
<dbReference type="Proteomes" id="UP000008840">
    <property type="component" value="Chromosome"/>
</dbReference>
<dbReference type="GO" id="GO:0005737">
    <property type="term" value="C:cytoplasm"/>
    <property type="evidence" value="ECO:0007669"/>
    <property type="project" value="UniProtKB-ARBA"/>
</dbReference>
<dbReference type="GO" id="GO:1990904">
    <property type="term" value="C:ribonucleoprotein complex"/>
    <property type="evidence" value="ECO:0007669"/>
    <property type="project" value="UniProtKB-KW"/>
</dbReference>
<dbReference type="GO" id="GO:0005840">
    <property type="term" value="C:ribosome"/>
    <property type="evidence" value="ECO:0007669"/>
    <property type="project" value="UniProtKB-KW"/>
</dbReference>
<dbReference type="GO" id="GO:0019843">
    <property type="term" value="F:rRNA binding"/>
    <property type="evidence" value="ECO:0007669"/>
    <property type="project" value="UniProtKB-UniRule"/>
</dbReference>
<dbReference type="GO" id="GO:0003735">
    <property type="term" value="F:structural constituent of ribosome"/>
    <property type="evidence" value="ECO:0007669"/>
    <property type="project" value="InterPro"/>
</dbReference>
<dbReference type="GO" id="GO:0006412">
    <property type="term" value="P:translation"/>
    <property type="evidence" value="ECO:0007669"/>
    <property type="project" value="UniProtKB-UniRule"/>
</dbReference>
<dbReference type="HAMAP" id="MF_01363">
    <property type="entry name" value="Ribosomal_bL21"/>
    <property type="match status" value="1"/>
</dbReference>
<dbReference type="InterPro" id="IPR028909">
    <property type="entry name" value="bL21-like"/>
</dbReference>
<dbReference type="InterPro" id="IPR036164">
    <property type="entry name" value="bL21-like_sf"/>
</dbReference>
<dbReference type="InterPro" id="IPR001787">
    <property type="entry name" value="Ribosomal_bL21"/>
</dbReference>
<dbReference type="InterPro" id="IPR018258">
    <property type="entry name" value="Ribosomal_bL21_CS"/>
</dbReference>
<dbReference type="NCBIfam" id="TIGR00061">
    <property type="entry name" value="L21"/>
    <property type="match status" value="1"/>
</dbReference>
<dbReference type="PANTHER" id="PTHR21349">
    <property type="entry name" value="50S RIBOSOMAL PROTEIN L21"/>
    <property type="match status" value="1"/>
</dbReference>
<dbReference type="PANTHER" id="PTHR21349:SF0">
    <property type="entry name" value="LARGE RIBOSOMAL SUBUNIT PROTEIN BL21M"/>
    <property type="match status" value="1"/>
</dbReference>
<dbReference type="Pfam" id="PF00829">
    <property type="entry name" value="Ribosomal_L21p"/>
    <property type="match status" value="1"/>
</dbReference>
<dbReference type="SUPFAM" id="SSF141091">
    <property type="entry name" value="L21p-like"/>
    <property type="match status" value="1"/>
</dbReference>
<dbReference type="PROSITE" id="PS01169">
    <property type="entry name" value="RIBOSOMAL_L21"/>
    <property type="match status" value="1"/>
</dbReference>
<keyword id="KW-1185">Reference proteome</keyword>
<keyword id="KW-0687">Ribonucleoprotein</keyword>
<keyword id="KW-0689">Ribosomal protein</keyword>
<keyword id="KW-0694">RNA-binding</keyword>
<keyword id="KW-0699">rRNA-binding</keyword>
<gene>
    <name evidence="1" type="primary">rplU</name>
    <name type="ordered locus">Smlt1278</name>
</gene>
<evidence type="ECO:0000255" key="1">
    <source>
        <dbReference type="HAMAP-Rule" id="MF_01363"/>
    </source>
</evidence>
<evidence type="ECO:0000305" key="2"/>
<accession>B2FTD1</accession>
<proteinExistence type="inferred from homology"/>
<organism>
    <name type="scientific">Stenotrophomonas maltophilia (strain K279a)</name>
    <dbReference type="NCBI Taxonomy" id="522373"/>
    <lineage>
        <taxon>Bacteria</taxon>
        <taxon>Pseudomonadati</taxon>
        <taxon>Pseudomonadota</taxon>
        <taxon>Gammaproteobacteria</taxon>
        <taxon>Lysobacterales</taxon>
        <taxon>Lysobacteraceae</taxon>
        <taxon>Stenotrophomonas</taxon>
        <taxon>Stenotrophomonas maltophilia group</taxon>
    </lineage>
</organism>